<feature type="chain" id="PRO_0000070114" description="G-protein coupled receptor 68">
    <location>
        <begin position="1"/>
        <end position="365"/>
    </location>
</feature>
<feature type="topological domain" description="Extracellular" evidence="1">
    <location>
        <begin position="1"/>
        <end position="12"/>
    </location>
</feature>
<feature type="transmembrane region" description="Helical; Name=1" evidence="1">
    <location>
        <begin position="13"/>
        <end position="49"/>
    </location>
</feature>
<feature type="topological domain" description="Cytoplasmic" evidence="1">
    <location>
        <begin position="50"/>
        <end position="53"/>
    </location>
</feature>
<feature type="transmembrane region" description="Helical; Name=2" evidence="1">
    <location>
        <begin position="54"/>
        <end position="84"/>
    </location>
</feature>
<feature type="topological domain" description="Extracellular" evidence="1">
    <location>
        <begin position="85"/>
        <end position="89"/>
    </location>
</feature>
<feature type="transmembrane region" description="Helical; Name=3" evidence="1">
    <location>
        <begin position="90"/>
        <end position="125"/>
    </location>
</feature>
<feature type="topological domain" description="Cytoplasmic" evidence="1">
    <location>
        <begin position="126"/>
        <end position="133"/>
    </location>
</feature>
<feature type="transmembrane region" description="Helical; Name=4" evidence="1">
    <location>
        <begin position="134"/>
        <end position="160"/>
    </location>
</feature>
<feature type="topological domain" description="Extracellular" evidence="1">
    <location>
        <begin position="161"/>
        <end position="176"/>
    </location>
</feature>
<feature type="transmembrane region" description="Helical; Name=5" evidence="1">
    <location>
        <begin position="177"/>
        <end position="214"/>
    </location>
</feature>
<feature type="topological domain" description="Cytoplasmic" evidence="1">
    <location>
        <begin position="215"/>
        <end position="218"/>
    </location>
</feature>
<feature type="transmembrane region" description="Helical; Name=6" evidence="1">
    <location>
        <begin position="219"/>
        <end position="254"/>
    </location>
</feature>
<feature type="topological domain" description="Extracellular" evidence="1">
    <location>
        <begin position="255"/>
        <end position="260"/>
    </location>
</feature>
<feature type="transmembrane region" description="Helical; Name=7" evidence="1">
    <location>
        <begin position="261"/>
        <end position="289"/>
    </location>
</feature>
<feature type="topological domain" description="Cytoplasmic" evidence="1">
    <location>
        <begin position="290"/>
        <end position="365"/>
    </location>
</feature>
<feature type="region of interest" description="Extracellular loop 2 (ECL2)" evidence="1">
    <location>
        <begin position="161"/>
        <end position="176"/>
    </location>
</feature>
<feature type="site" description="Proton sensing" evidence="1">
    <location>
        <position position="17"/>
    </location>
</feature>
<feature type="site" description="Proton sensing" evidence="1">
    <location>
        <position position="20"/>
    </location>
</feature>
<feature type="site" description="Proton sensing" evidence="1">
    <location>
        <position position="84"/>
    </location>
</feature>
<feature type="site" description="Required for activation" evidence="1">
    <location>
        <position position="149"/>
    </location>
</feature>
<feature type="site" description="Proton sensing" evidence="1">
    <location>
        <position position="169"/>
    </location>
</feature>
<feature type="site" description="Proton sensing" evidence="1">
    <location>
        <position position="269"/>
    </location>
</feature>
<feature type="glycosylation site" description="N-linked (GlcNAc...) asparagine" evidence="2">
    <location>
        <position position="3"/>
    </location>
</feature>
<feature type="glycosylation site" description="N-linked (GlcNAc...) asparagine" evidence="2">
    <location>
        <position position="8"/>
    </location>
</feature>
<feature type="disulfide bond" evidence="1">
    <location>
        <begin position="13"/>
        <end position="258"/>
    </location>
</feature>
<feature type="disulfide bond" evidence="3">
    <location>
        <begin position="94"/>
        <end position="172"/>
    </location>
</feature>
<accession>Q8BFQ3</accession>
<accession>Q148P7</accession>
<accession>Q3U1L3</accession>
<accession>Q80T34</accession>
<gene>
    <name evidence="12 14" type="primary">Gpr68</name>
    <name evidence="11" type="synonym">Ogr1</name>
</gene>
<comment type="function">
    <text evidence="1 4 5 7 9">Proton-sensing G-protein coupled receptor activated by extracellular pH, which is required to monitor pH changes and generate adaptive reactions (By similarity). The receptor is almost silent at pH 7.8 but fully activated at pH 6.8 (By similarity). Ligand binding causes a conformation change that triggers signaling via guanine nucleotide-binding proteins (G proteins) and modulates the activity of downstream effectors, such as phospholipase C (By similarity). GPR68 is mainly coupled to G(q) G proteins and mediates production of diacylglycerol (DAG) and inositol 1,4,5-trisphosphate (IP3) (By similarity). Acts as a key mechanosensor of fluid shear stress and membrane stretch (PubMed:29677517). Expressed in endothelial cells of small-diameter resistance arteries, where it mediates flow-induced dilation in response to shear stress (PubMed:29677517). May represents an osteoblastic pH sensor regulating cell-mediated responses to acidosis in bone (PubMed:18847331). Acts as a regulator of calcium-sensing receptor CASR in a seesaw manner: GPR68-mediated signaling inhibits CASR signaling in response to protons, while CASR inhibits GPR68 in presence of extracellular calcium (PubMed:26261299). Also functions as a metastasis suppressor gene in prostate cancer (PubMed:17728215).</text>
</comment>
<comment type="activity regulation">
    <text evidence="1 8 10">Activated by a network of residues that connects an extracellular-facing cavity to Glu-149, a conserved charged residue buried in the transmembrane core of the receptor (By similarity). Protonation likely drives conformational changes in extracellular loop 2 (ECL2), which stabilizes movement of transmembrane 3 (TM3) and a series of rearrangements that connect the extracellular-facing cavity to Glu-149, a residue only conserved in proton-sensing G-protein coupled receptors (By similarity). Activated in an allosteric manner by divalent metal ions at the extracellular surface following the order: Cd(2+) &gt; Co(2+) &gt; Ni(2+) &gt; Zn(2+) &gt; Fe(2+) &gt; Ca(2+) &gt; Mg(2+) (By similarity). Activated by ogerin (ZINC67740571), a selective GPR68 positive allosteric modulator (PubMed:26550826). Inhibited by small molecule GPR68-I, decreasing inflammation in models of colitis (PubMed:34722644).</text>
</comment>
<comment type="subcellular location">
    <subcellularLocation>
        <location evidence="1">Cell membrane</location>
        <topology evidence="2">Multi-pass membrane protein</topology>
    </subcellularLocation>
</comment>
<comment type="tissue specificity">
    <text evidence="6 9">Expressed in the lung, testis, heart, brain, spleen, thymus, brown fat, small intestine, colon, peripheral blood leukocytes, macrophages, stomach, ovary and white fat but not in the liver, kidney, and skeletal muscle (PubMed:19479052). Expression in the prostate is weak but detectable (PubMed:19479052). Specifically expressed in endothelial cells of small-diameter resistance arteries (PubMed:29677517).</text>
</comment>
<comment type="domain">
    <text evidence="1">A multitude of proton-sensing residues, which include extracellular histidine residues (His-17, His-20, His-84, His-169 and His-269) or triad of buried acidic residues (Asp-67, Glu-149 and Asp-282), contribute to activation of the G-protein coupled receptor activity and pH sensitivity.</text>
</comment>
<comment type="disruption phenotype">
    <text evidence="6 9">Mice have grossly normal but display reduced osteoclasts derived from bone marrow cells; a pH-dependent osteoclast survival effect is also detected (PubMed:19479052). However, the overall bone structures of the mice are not affected (PubMed:19479052). In addition melanoma cell tumorigenesis is significantly inhibited (PubMed:19479052). Mice display defects in the response to shear stress, and show impaired acute flow-mediated dilation and chronic flow-mediated outward remodeling in mesenteric arterioles (PubMed:29677517).</text>
</comment>
<comment type="similarity">
    <text evidence="3">Belongs to the G-protein coupled receptor 1 family.</text>
</comment>
<comment type="sequence caution" evidence="13">
    <conflict type="erroneous initiation">
        <sequence resource="EMBL-CDS" id="AAI18035"/>
    </conflict>
</comment>
<comment type="sequence caution" evidence="13">
    <conflict type="erroneous initiation">
        <sequence resource="EMBL-CDS" id="AAI18045"/>
    </conflict>
</comment>
<comment type="sequence caution" evidence="13">
    <conflict type="erroneous initiation">
        <sequence resource="EMBL-CDS" id="BAC29521"/>
    </conflict>
</comment>
<comment type="sequence caution" evidence="13">
    <conflict type="erroneous initiation">
        <sequence resource="EMBL-CDS" id="BAC39863"/>
    </conflict>
</comment>
<comment type="sequence caution" evidence="13">
    <conflict type="erroneous initiation">
        <sequence resource="EMBL-CDS" id="BAE33483"/>
    </conflict>
</comment>
<organism>
    <name type="scientific">Mus musculus</name>
    <name type="common">Mouse</name>
    <dbReference type="NCBI Taxonomy" id="10090"/>
    <lineage>
        <taxon>Eukaryota</taxon>
        <taxon>Metazoa</taxon>
        <taxon>Chordata</taxon>
        <taxon>Craniata</taxon>
        <taxon>Vertebrata</taxon>
        <taxon>Euteleostomi</taxon>
        <taxon>Mammalia</taxon>
        <taxon>Eutheria</taxon>
        <taxon>Euarchontoglires</taxon>
        <taxon>Glires</taxon>
        <taxon>Rodentia</taxon>
        <taxon>Myomorpha</taxon>
        <taxon>Muroidea</taxon>
        <taxon>Muridae</taxon>
        <taxon>Murinae</taxon>
        <taxon>Mus</taxon>
        <taxon>Mus</taxon>
    </lineage>
</organism>
<reference key="1">
    <citation type="journal article" date="2005" name="Science">
        <title>The transcriptional landscape of the mammalian genome.</title>
        <authorList>
            <person name="Carninci P."/>
            <person name="Kasukawa T."/>
            <person name="Katayama S."/>
            <person name="Gough J."/>
            <person name="Frith M.C."/>
            <person name="Maeda N."/>
            <person name="Oyama R."/>
            <person name="Ravasi T."/>
            <person name="Lenhard B."/>
            <person name="Wells C."/>
            <person name="Kodzius R."/>
            <person name="Shimokawa K."/>
            <person name="Bajic V.B."/>
            <person name="Brenner S.E."/>
            <person name="Batalov S."/>
            <person name="Forrest A.R."/>
            <person name="Zavolan M."/>
            <person name="Davis M.J."/>
            <person name="Wilming L.G."/>
            <person name="Aidinis V."/>
            <person name="Allen J.E."/>
            <person name="Ambesi-Impiombato A."/>
            <person name="Apweiler R."/>
            <person name="Aturaliya R.N."/>
            <person name="Bailey T.L."/>
            <person name="Bansal M."/>
            <person name="Baxter L."/>
            <person name="Beisel K.W."/>
            <person name="Bersano T."/>
            <person name="Bono H."/>
            <person name="Chalk A.M."/>
            <person name="Chiu K.P."/>
            <person name="Choudhary V."/>
            <person name="Christoffels A."/>
            <person name="Clutterbuck D.R."/>
            <person name="Crowe M.L."/>
            <person name="Dalla E."/>
            <person name="Dalrymple B.P."/>
            <person name="de Bono B."/>
            <person name="Della Gatta G."/>
            <person name="di Bernardo D."/>
            <person name="Down T."/>
            <person name="Engstrom P."/>
            <person name="Fagiolini M."/>
            <person name="Faulkner G."/>
            <person name="Fletcher C.F."/>
            <person name="Fukushima T."/>
            <person name="Furuno M."/>
            <person name="Futaki S."/>
            <person name="Gariboldi M."/>
            <person name="Georgii-Hemming P."/>
            <person name="Gingeras T.R."/>
            <person name="Gojobori T."/>
            <person name="Green R.E."/>
            <person name="Gustincich S."/>
            <person name="Harbers M."/>
            <person name="Hayashi Y."/>
            <person name="Hensch T.K."/>
            <person name="Hirokawa N."/>
            <person name="Hill D."/>
            <person name="Huminiecki L."/>
            <person name="Iacono M."/>
            <person name="Ikeo K."/>
            <person name="Iwama A."/>
            <person name="Ishikawa T."/>
            <person name="Jakt M."/>
            <person name="Kanapin A."/>
            <person name="Katoh M."/>
            <person name="Kawasawa Y."/>
            <person name="Kelso J."/>
            <person name="Kitamura H."/>
            <person name="Kitano H."/>
            <person name="Kollias G."/>
            <person name="Krishnan S.P."/>
            <person name="Kruger A."/>
            <person name="Kummerfeld S.K."/>
            <person name="Kurochkin I.V."/>
            <person name="Lareau L.F."/>
            <person name="Lazarevic D."/>
            <person name="Lipovich L."/>
            <person name="Liu J."/>
            <person name="Liuni S."/>
            <person name="McWilliam S."/>
            <person name="Madan Babu M."/>
            <person name="Madera M."/>
            <person name="Marchionni L."/>
            <person name="Matsuda H."/>
            <person name="Matsuzawa S."/>
            <person name="Miki H."/>
            <person name="Mignone F."/>
            <person name="Miyake S."/>
            <person name="Morris K."/>
            <person name="Mottagui-Tabar S."/>
            <person name="Mulder N."/>
            <person name="Nakano N."/>
            <person name="Nakauchi H."/>
            <person name="Ng P."/>
            <person name="Nilsson R."/>
            <person name="Nishiguchi S."/>
            <person name="Nishikawa S."/>
            <person name="Nori F."/>
            <person name="Ohara O."/>
            <person name="Okazaki Y."/>
            <person name="Orlando V."/>
            <person name="Pang K.C."/>
            <person name="Pavan W.J."/>
            <person name="Pavesi G."/>
            <person name="Pesole G."/>
            <person name="Petrovsky N."/>
            <person name="Piazza S."/>
            <person name="Reed J."/>
            <person name="Reid J.F."/>
            <person name="Ring B.Z."/>
            <person name="Ringwald M."/>
            <person name="Rost B."/>
            <person name="Ruan Y."/>
            <person name="Salzberg S.L."/>
            <person name="Sandelin A."/>
            <person name="Schneider C."/>
            <person name="Schoenbach C."/>
            <person name="Sekiguchi K."/>
            <person name="Semple C.A."/>
            <person name="Seno S."/>
            <person name="Sessa L."/>
            <person name="Sheng Y."/>
            <person name="Shibata Y."/>
            <person name="Shimada H."/>
            <person name="Shimada K."/>
            <person name="Silva D."/>
            <person name="Sinclair B."/>
            <person name="Sperling S."/>
            <person name="Stupka E."/>
            <person name="Sugiura K."/>
            <person name="Sultana R."/>
            <person name="Takenaka Y."/>
            <person name="Taki K."/>
            <person name="Tammoja K."/>
            <person name="Tan S.L."/>
            <person name="Tang S."/>
            <person name="Taylor M.S."/>
            <person name="Tegner J."/>
            <person name="Teichmann S.A."/>
            <person name="Ueda H.R."/>
            <person name="van Nimwegen E."/>
            <person name="Verardo R."/>
            <person name="Wei C.L."/>
            <person name="Yagi K."/>
            <person name="Yamanishi H."/>
            <person name="Zabarovsky E."/>
            <person name="Zhu S."/>
            <person name="Zimmer A."/>
            <person name="Hide W."/>
            <person name="Bult C."/>
            <person name="Grimmond S.M."/>
            <person name="Teasdale R.D."/>
            <person name="Liu E.T."/>
            <person name="Brusic V."/>
            <person name="Quackenbush J."/>
            <person name="Wahlestedt C."/>
            <person name="Mattick J.S."/>
            <person name="Hume D.A."/>
            <person name="Kai C."/>
            <person name="Sasaki D."/>
            <person name="Tomaru Y."/>
            <person name="Fukuda S."/>
            <person name="Kanamori-Katayama M."/>
            <person name="Suzuki M."/>
            <person name="Aoki J."/>
            <person name="Arakawa T."/>
            <person name="Iida J."/>
            <person name="Imamura K."/>
            <person name="Itoh M."/>
            <person name="Kato T."/>
            <person name="Kawaji H."/>
            <person name="Kawagashira N."/>
            <person name="Kawashima T."/>
            <person name="Kojima M."/>
            <person name="Kondo S."/>
            <person name="Konno H."/>
            <person name="Nakano K."/>
            <person name="Ninomiya N."/>
            <person name="Nishio T."/>
            <person name="Okada M."/>
            <person name="Plessy C."/>
            <person name="Shibata K."/>
            <person name="Shiraki T."/>
            <person name="Suzuki S."/>
            <person name="Tagami M."/>
            <person name="Waki K."/>
            <person name="Watahiki A."/>
            <person name="Okamura-Oho Y."/>
            <person name="Suzuki H."/>
            <person name="Kawai J."/>
            <person name="Hayashizaki Y."/>
        </authorList>
    </citation>
    <scope>NUCLEOTIDE SEQUENCE [LARGE SCALE MRNA]</scope>
    <source>
        <strain>C57BL/6J</strain>
        <tissue>Bone</tissue>
        <tissue>Eye</tissue>
    </source>
</reference>
<reference key="2">
    <citation type="journal article" date="2004" name="Genome Res.">
        <title>The status, quality, and expansion of the NIH full-length cDNA project: the Mammalian Gene Collection (MGC).</title>
        <authorList>
            <consortium name="The MGC Project Team"/>
        </authorList>
    </citation>
    <scope>NUCLEOTIDE SEQUENCE [LARGE SCALE MRNA]</scope>
</reference>
<reference key="3">
    <citation type="journal article" date="2003" name="Proc. Natl. Acad. Sci. U.S.A.">
        <title>The G protein-coupled receptor repertoires of human and mouse.</title>
        <authorList>
            <person name="Vassilatis D.K."/>
            <person name="Hohmann J.G."/>
            <person name="Zeng H."/>
            <person name="Li F."/>
            <person name="Ranchalis J.E."/>
            <person name="Mortrud M.T."/>
            <person name="Brown A."/>
            <person name="Rodriguez S.S."/>
            <person name="Weller J.R."/>
            <person name="Wright A.C."/>
            <person name="Bergmann J.E."/>
            <person name="Gaitanaris G.A."/>
        </authorList>
    </citation>
    <scope>NUCLEOTIDE SEQUENCE [LARGE SCALE MRNA] OF 47-224</scope>
</reference>
<reference key="4">
    <citation type="journal article" date="2007" name="J. Natl. Cancer Inst.">
        <title>Ovarian cancer G protein-coupled receptor 1, a new metastasis suppressor gene in prostate cancer.</title>
        <authorList>
            <person name="Singh L.S."/>
            <person name="Berk M."/>
            <person name="Oates R."/>
            <person name="Zhao Z."/>
            <person name="Tan H."/>
            <person name="Jiang Y."/>
            <person name="Zhou A."/>
            <person name="Kirmani K."/>
            <person name="Steinmetz R."/>
            <person name="Lindner D."/>
            <person name="Xu Y."/>
        </authorList>
    </citation>
    <scope>FUNCTION</scope>
</reference>
<reference key="5">
    <citation type="journal article" date="2009" name="J. Bone Miner. Res.">
        <title>Metabolic acidosis increases intracellular calcium in bone cells through activation of the proton receptor OGR1.</title>
        <authorList>
            <person name="Frick K.K."/>
            <person name="Krieger N.S."/>
            <person name="Nehrke K."/>
            <person name="Bushinsky D.A."/>
        </authorList>
    </citation>
    <scope>FUNCTION</scope>
</reference>
<reference key="6">
    <citation type="journal article" date="2009" name="PLoS ONE">
        <title>Abnormalities in osteoclastogenesis and decreased tumorigenesis in mice deficient for ovarian cancer G protein-coupled receptor 1.</title>
        <authorList>
            <person name="Li H."/>
            <person name="Wang D."/>
            <person name="Singh L.S."/>
            <person name="Berk M."/>
            <person name="Tan H."/>
            <person name="Zhao Z."/>
            <person name="Steinmetz R."/>
            <person name="Kirmani K."/>
            <person name="Wei G."/>
            <person name="Xu Y."/>
        </authorList>
    </citation>
    <scope>TISSUE SPECIFICITY</scope>
    <scope>DISRUPTION PHENOTYPE</scope>
</reference>
<reference key="7">
    <citation type="journal article" date="2015" name="Nature">
        <title>Allosteric ligands for the pharmacologically dark receptors GPR68 and GPR65.</title>
        <authorList>
            <person name="Huang X.P."/>
            <person name="Karpiak J."/>
            <person name="Kroeze W.K."/>
            <person name="Zhu H."/>
            <person name="Chen X."/>
            <person name="Moy S.S."/>
            <person name="Saddoris K.A."/>
            <person name="Nikolova V.D."/>
            <person name="Farrell M.S."/>
            <person name="Wang S."/>
            <person name="Mangano T.J."/>
            <person name="Deshpande D.A."/>
            <person name="Jiang A."/>
            <person name="Penn R.B."/>
            <person name="Jin J."/>
            <person name="Koller B.H."/>
            <person name="Kenakin T."/>
            <person name="Shoichet B.K."/>
            <person name="Roth B.L."/>
        </authorList>
    </citation>
    <scope>ACTIVITY REGULATION</scope>
</reference>
<reference key="8">
    <citation type="journal article" date="2015" name="Proc. Natl. Acad. Sci. U.S.A.">
        <title>Reciprocal regulation of two G protein-coupled receptors sensing extracellular concentrations of Ca2+ and H.</title>
        <authorList>
            <person name="Wei W.C."/>
            <person name="Jacobs B."/>
            <person name="Becker E.B."/>
            <person name="Glitsch M.D."/>
        </authorList>
    </citation>
    <scope>FUNCTION</scope>
</reference>
<reference key="9">
    <citation type="journal article" date="2018" name="Cell">
        <title>GPR68 Senses flow and is essential for vascular physiology.</title>
        <authorList>
            <person name="Xu J."/>
            <person name="Mathur J."/>
            <person name="Vessieres E."/>
            <person name="Hammack S."/>
            <person name="Nonomura K."/>
            <person name="Favre J."/>
            <person name="Grimaud L."/>
            <person name="Petrus M."/>
            <person name="Francisco A."/>
            <person name="Li J."/>
            <person name="Lee V."/>
            <person name="Xiang F.L."/>
            <person name="Mainquist J.K."/>
            <person name="Cahalan S.M."/>
            <person name="Orth A.P."/>
            <person name="Walker J.R."/>
            <person name="Ma S."/>
            <person name="Lukacs V."/>
            <person name="Bordone L."/>
            <person name="Bandell M."/>
            <person name="Laffitte B."/>
            <person name="Xu Y."/>
            <person name="Chien S."/>
            <person name="Henrion D."/>
            <person name="Patapoutian A."/>
        </authorList>
    </citation>
    <scope>FUNCTION</scope>
    <scope>DISRUPTION PHENOTYPE</scope>
    <scope>TISSUE SPECIFICITY</scope>
</reference>
<reference key="10">
    <citation type="journal article" date="2021" name="Inflamm. Intest. Dis.">
        <title>A novel OGR1 (GPR68) inhibitor attenuates inflammation in murine models of colitis.</title>
        <authorList>
            <person name="de Valliere C."/>
            <person name="Baebler K."/>
            <person name="Busenhart P."/>
            <person name="Schwarzfischer M."/>
            <person name="Maeyashiki C."/>
            <person name="Schuler C."/>
            <person name="Atrott K."/>
            <person name="Lang S."/>
            <person name="Spalinger M.R."/>
            <person name="Scharl M."/>
            <person name="Ruiz-Castro P.A."/>
            <person name="Hausmann M."/>
            <person name="Rogler G."/>
        </authorList>
    </citation>
    <scope>ACTIVITY REGULATION</scope>
</reference>
<keyword id="KW-1003">Cell membrane</keyword>
<keyword id="KW-1015">Disulfide bond</keyword>
<keyword id="KW-0297">G-protein coupled receptor</keyword>
<keyword id="KW-0325">Glycoprotein</keyword>
<keyword id="KW-0472">Membrane</keyword>
<keyword id="KW-0675">Receptor</keyword>
<keyword id="KW-1185">Reference proteome</keyword>
<keyword id="KW-0807">Transducer</keyword>
<keyword id="KW-0812">Transmembrane</keyword>
<keyword id="KW-1133">Transmembrane helix</keyword>
<keyword id="KW-0043">Tumor suppressor</keyword>
<dbReference type="EMBL" id="AK036659">
    <property type="protein sequence ID" value="BAC29521.1"/>
    <property type="status" value="ALT_INIT"/>
    <property type="molecule type" value="mRNA"/>
</dbReference>
<dbReference type="EMBL" id="AK087410">
    <property type="protein sequence ID" value="BAC39863.1"/>
    <property type="status" value="ALT_INIT"/>
    <property type="molecule type" value="mRNA"/>
</dbReference>
<dbReference type="EMBL" id="AK155886">
    <property type="protein sequence ID" value="BAE33483.1"/>
    <property type="status" value="ALT_INIT"/>
    <property type="molecule type" value="mRNA"/>
</dbReference>
<dbReference type="EMBL" id="BC118034">
    <property type="protein sequence ID" value="AAI18035.2"/>
    <property type="status" value="ALT_INIT"/>
    <property type="molecule type" value="mRNA"/>
</dbReference>
<dbReference type="EMBL" id="BC118044">
    <property type="protein sequence ID" value="AAI18045.2"/>
    <property type="status" value="ALT_INIT"/>
    <property type="molecule type" value="mRNA"/>
</dbReference>
<dbReference type="EMBL" id="AY255616">
    <property type="protein sequence ID" value="AAO85128.1"/>
    <property type="molecule type" value="mRNA"/>
</dbReference>
<dbReference type="CCDS" id="CCDS26109.1"/>
<dbReference type="RefSeq" id="NP_001171144.1">
    <property type="nucleotide sequence ID" value="NM_001177673.1"/>
</dbReference>
<dbReference type="RefSeq" id="NP_001171145.1">
    <property type="nucleotide sequence ID" value="NM_001177674.2"/>
</dbReference>
<dbReference type="RefSeq" id="NP_001390243.1">
    <property type="nucleotide sequence ID" value="NM_001403314.1"/>
</dbReference>
<dbReference type="RefSeq" id="NP_780702.1">
    <property type="nucleotide sequence ID" value="NM_175493.4"/>
</dbReference>
<dbReference type="SMR" id="Q8BFQ3"/>
<dbReference type="FunCoup" id="Q8BFQ3">
    <property type="interactions" value="257"/>
</dbReference>
<dbReference type="STRING" id="10090.ENSMUSP00000105693"/>
<dbReference type="ChEMBL" id="CHEMBL4523380"/>
<dbReference type="GlyCosmos" id="Q8BFQ3">
    <property type="glycosylation" value="2 sites, No reported glycans"/>
</dbReference>
<dbReference type="GlyGen" id="Q8BFQ3">
    <property type="glycosylation" value="2 sites"/>
</dbReference>
<dbReference type="iPTMnet" id="Q8BFQ3"/>
<dbReference type="PhosphoSitePlus" id="Q8BFQ3"/>
<dbReference type="jPOST" id="Q8BFQ3"/>
<dbReference type="PaxDb" id="10090-ENSMUSP00000105693"/>
<dbReference type="ProteomicsDB" id="294273"/>
<dbReference type="Pumba" id="Q8BFQ3"/>
<dbReference type="Antibodypedia" id="13584">
    <property type="antibodies" value="293 antibodies from 30 providers"/>
</dbReference>
<dbReference type="DNASU" id="238377"/>
<dbReference type="Ensembl" id="ENSMUST00000053668.10">
    <property type="protein sequence ID" value="ENSMUSP00000057510.4"/>
    <property type="gene ID" value="ENSMUSG00000047415.13"/>
</dbReference>
<dbReference type="Ensembl" id="ENSMUST00000110065.8">
    <property type="protein sequence ID" value="ENSMUSP00000105692.2"/>
    <property type="gene ID" value="ENSMUSG00000047415.13"/>
</dbReference>
<dbReference type="Ensembl" id="ENSMUST00000110066.8">
    <property type="protein sequence ID" value="ENSMUSP00000105693.2"/>
    <property type="gene ID" value="ENSMUSG00000047415.13"/>
</dbReference>
<dbReference type="GeneID" id="238377"/>
<dbReference type="KEGG" id="mmu:238377"/>
<dbReference type="UCSC" id="uc007ota.2">
    <property type="organism name" value="mouse"/>
</dbReference>
<dbReference type="AGR" id="MGI:2441763"/>
<dbReference type="CTD" id="8111"/>
<dbReference type="MGI" id="MGI:2441763">
    <property type="gene designation" value="Gpr68"/>
</dbReference>
<dbReference type="VEuPathDB" id="HostDB:ENSMUSG00000047415"/>
<dbReference type="eggNOG" id="ENOG502QQJA">
    <property type="taxonomic scope" value="Eukaryota"/>
</dbReference>
<dbReference type="GeneTree" id="ENSGT00950000183136"/>
<dbReference type="HOGENOM" id="CLU_009579_8_2_1"/>
<dbReference type="InParanoid" id="Q8BFQ3"/>
<dbReference type="OMA" id="TCCFVFT"/>
<dbReference type="OrthoDB" id="6435638at2759"/>
<dbReference type="PhylomeDB" id="Q8BFQ3"/>
<dbReference type="TreeFam" id="TF331803"/>
<dbReference type="Reactome" id="R-MMU-373076">
    <property type="pathway name" value="Class A/1 (Rhodopsin-like receptors)"/>
</dbReference>
<dbReference type="Reactome" id="R-MMU-416476">
    <property type="pathway name" value="G alpha (q) signalling events"/>
</dbReference>
<dbReference type="BioGRID-ORCS" id="238377">
    <property type="hits" value="1 hit in 79 CRISPR screens"/>
</dbReference>
<dbReference type="ChiTaRS" id="Gpr68">
    <property type="organism name" value="mouse"/>
</dbReference>
<dbReference type="PRO" id="PR:Q8BFQ3"/>
<dbReference type="Proteomes" id="UP000000589">
    <property type="component" value="Chromosome 12"/>
</dbReference>
<dbReference type="RNAct" id="Q8BFQ3">
    <property type="molecule type" value="protein"/>
</dbReference>
<dbReference type="Bgee" id="ENSMUSG00000047415">
    <property type="expression patterns" value="Expressed in animal zygote and 126 other cell types or tissues"/>
</dbReference>
<dbReference type="GO" id="GO:0005886">
    <property type="term" value="C:plasma membrane"/>
    <property type="evidence" value="ECO:0007669"/>
    <property type="project" value="UniProtKB-SubCell"/>
</dbReference>
<dbReference type="GO" id="GO:0004930">
    <property type="term" value="F:G protein-coupled receptor activity"/>
    <property type="evidence" value="ECO:0007669"/>
    <property type="project" value="UniProtKB-KW"/>
</dbReference>
<dbReference type="GO" id="GO:0071467">
    <property type="term" value="P:cellular response to pH"/>
    <property type="evidence" value="ECO:0000315"/>
    <property type="project" value="MGI"/>
</dbReference>
<dbReference type="GO" id="GO:0030073">
    <property type="term" value="P:insulin secretion"/>
    <property type="evidence" value="ECO:0000315"/>
    <property type="project" value="MGI"/>
</dbReference>
<dbReference type="GO" id="GO:0030224">
    <property type="term" value="P:monocyte differentiation"/>
    <property type="evidence" value="ECO:0000315"/>
    <property type="project" value="MGI"/>
</dbReference>
<dbReference type="GO" id="GO:0045656">
    <property type="term" value="P:negative regulation of monocyte differentiation"/>
    <property type="evidence" value="ECO:0000315"/>
    <property type="project" value="MGI"/>
</dbReference>
<dbReference type="GO" id="GO:0036035">
    <property type="term" value="P:osteoclast development"/>
    <property type="evidence" value="ECO:0000315"/>
    <property type="project" value="MGI"/>
</dbReference>
<dbReference type="GO" id="GO:0032024">
    <property type="term" value="P:positive regulation of insulin secretion"/>
    <property type="evidence" value="ECO:0000315"/>
    <property type="project" value="MGI"/>
</dbReference>
<dbReference type="GO" id="GO:0035774">
    <property type="term" value="P:positive regulation of insulin secretion involved in cellular response to glucose stimulus"/>
    <property type="evidence" value="ECO:0000315"/>
    <property type="project" value="MGI"/>
</dbReference>
<dbReference type="GO" id="GO:2001206">
    <property type="term" value="P:positive regulation of osteoclast development"/>
    <property type="evidence" value="ECO:0000315"/>
    <property type="project" value="MGI"/>
</dbReference>
<dbReference type="CDD" id="cd15367">
    <property type="entry name" value="7tmA_GPR68_OGR1"/>
    <property type="match status" value="1"/>
</dbReference>
<dbReference type="FunFam" id="1.20.1070.10:FF:000065">
    <property type="entry name" value="G-protein coupled receptor 4"/>
    <property type="match status" value="1"/>
</dbReference>
<dbReference type="Gene3D" id="1.20.1070.10">
    <property type="entry name" value="Rhodopsin 7-helix transmembrane proteins"/>
    <property type="match status" value="1"/>
</dbReference>
<dbReference type="InterPro" id="IPR000276">
    <property type="entry name" value="GPCR_Rhodpsn"/>
</dbReference>
<dbReference type="InterPro" id="IPR017452">
    <property type="entry name" value="GPCR_Rhodpsn_7TM"/>
</dbReference>
<dbReference type="InterPro" id="IPR005389">
    <property type="entry name" value="OGR1_rcpt"/>
</dbReference>
<dbReference type="PANTHER" id="PTHR24234">
    <property type="entry name" value="LYSOPHOSPHATIDIC ACID RECEPTOR 5/SPHINGOSYLPHOSPHORYLCHOLINE RECEPTOR"/>
    <property type="match status" value="1"/>
</dbReference>
<dbReference type="PANTHER" id="PTHR24234:SF5">
    <property type="entry name" value="OVARIAN CANCER G-PROTEIN COUPLED RECEPTOR 1"/>
    <property type="match status" value="1"/>
</dbReference>
<dbReference type="Pfam" id="PF00001">
    <property type="entry name" value="7tm_1"/>
    <property type="match status" value="1"/>
</dbReference>
<dbReference type="PRINTS" id="PR00237">
    <property type="entry name" value="GPCRRHODOPSN"/>
</dbReference>
<dbReference type="PRINTS" id="PR01564">
    <property type="entry name" value="OGR1RECEPTOR"/>
</dbReference>
<dbReference type="SUPFAM" id="SSF81321">
    <property type="entry name" value="Family A G protein-coupled receptor-like"/>
    <property type="match status" value="1"/>
</dbReference>
<dbReference type="PROSITE" id="PS00237">
    <property type="entry name" value="G_PROTEIN_RECEP_F1_1"/>
    <property type="match status" value="1"/>
</dbReference>
<dbReference type="PROSITE" id="PS50262">
    <property type="entry name" value="G_PROTEIN_RECEP_F1_2"/>
    <property type="match status" value="1"/>
</dbReference>
<proteinExistence type="evidence at transcript level"/>
<protein>
    <recommendedName>
        <fullName>G-protein coupled receptor 68</fullName>
    </recommendedName>
    <alternativeName>
        <fullName evidence="11">Ovarian cancer G-protein coupled receptor 1 homolog</fullName>
    </alternativeName>
</protein>
<evidence type="ECO:0000250" key="1">
    <source>
        <dbReference type="UniProtKB" id="Q15743"/>
    </source>
</evidence>
<evidence type="ECO:0000255" key="2"/>
<evidence type="ECO:0000255" key="3">
    <source>
        <dbReference type="PROSITE-ProRule" id="PRU00521"/>
    </source>
</evidence>
<evidence type="ECO:0000269" key="4">
    <source>
    </source>
</evidence>
<evidence type="ECO:0000269" key="5">
    <source>
    </source>
</evidence>
<evidence type="ECO:0000269" key="6">
    <source>
    </source>
</evidence>
<evidence type="ECO:0000269" key="7">
    <source>
    </source>
</evidence>
<evidence type="ECO:0000269" key="8">
    <source>
    </source>
</evidence>
<evidence type="ECO:0000269" key="9">
    <source>
    </source>
</evidence>
<evidence type="ECO:0000269" key="10">
    <source>
    </source>
</evidence>
<evidence type="ECO:0000303" key="11">
    <source>
    </source>
</evidence>
<evidence type="ECO:0000303" key="12">
    <source>
    </source>
</evidence>
<evidence type="ECO:0000305" key="13"/>
<evidence type="ECO:0000312" key="14">
    <source>
        <dbReference type="MGI" id="MGI:2441763"/>
    </source>
</evidence>
<sequence>MGNITTENSSLSCPIDHTIHQTLAPVVYVTVLVVGFPANCLSLYFGYLQIKARNELGVYLCNLTIADLFYICSLPFWLQYVLQHDDWSHGDLSCQVCGILLYENIYISVGFLCCISIDRYLAVAHPFRFHQFRTLKAAVGVSVLIWAKELLTSIYFLNHKEVIEDEDQHRVCFEHYPIQAWQRSINYYRFLVGFLFPICLLLASYQGILRAVRRSHGTQKSRKDQIQRLVLSTVVIFLACFLPYHVLLLVRSLWERNCEFAKSIFNVYHFSLLLTSFNCVADPVLYCFVSETTHRDLARLRGACLAVLTCSRTSRAREAYPLGAPEASGKSGAQGEEPELLTKLHSAFQTPSSLGVGGPSTVGLA</sequence>
<name>GPR68_MOUSE</name>